<protein>
    <recommendedName>
        <fullName>Cationic amino acid transporter 4</fullName>
        <shortName>CAT-4</shortName>
        <shortName>CAT4</shortName>
    </recommendedName>
    <alternativeName>
        <fullName>Solute carrier family 7 member 4</fullName>
    </alternativeName>
</protein>
<accession>Q8BLQ7</accession>
<feature type="chain" id="PRO_0000304934" description="Cationic amino acid transporter 4">
    <location>
        <begin position="1"/>
        <end position="635"/>
    </location>
</feature>
<feature type="transmembrane region" description="Helical" evidence="2">
    <location>
        <begin position="42"/>
        <end position="62"/>
    </location>
</feature>
<feature type="transmembrane region" description="Helical" evidence="2">
    <location>
        <begin position="66"/>
        <end position="86"/>
    </location>
</feature>
<feature type="transmembrane region" description="Helical" evidence="2">
    <location>
        <begin position="113"/>
        <end position="133"/>
    </location>
</feature>
<feature type="transmembrane region" description="Helical" evidence="2">
    <location>
        <begin position="197"/>
        <end position="217"/>
    </location>
</feature>
<feature type="transmembrane region" description="Helical" evidence="2">
    <location>
        <begin position="229"/>
        <end position="249"/>
    </location>
</feature>
<feature type="transmembrane region" description="Helical" evidence="2">
    <location>
        <begin position="270"/>
        <end position="290"/>
    </location>
</feature>
<feature type="transmembrane region" description="Helical" evidence="2">
    <location>
        <begin position="318"/>
        <end position="338"/>
    </location>
</feature>
<feature type="transmembrane region" description="Helical" evidence="2">
    <location>
        <begin position="365"/>
        <end position="385"/>
    </location>
</feature>
<feature type="transmembrane region" description="Helical" evidence="2">
    <location>
        <begin position="391"/>
        <end position="411"/>
    </location>
</feature>
<feature type="transmembrane region" description="Helical" evidence="2">
    <location>
        <begin position="478"/>
        <end position="498"/>
    </location>
</feature>
<feature type="transmembrane region" description="Helical" evidence="2">
    <location>
        <begin position="508"/>
        <end position="528"/>
    </location>
</feature>
<feature type="transmembrane region" description="Helical" evidence="2">
    <location>
        <begin position="539"/>
        <end position="559"/>
    </location>
</feature>
<feature type="transmembrane region" description="Helical" evidence="2">
    <location>
        <begin position="567"/>
        <end position="587"/>
    </location>
</feature>
<feature type="modified residue" description="Phosphoserine" evidence="4">
    <location>
        <position position="422"/>
    </location>
</feature>
<feature type="modified residue" description="Phosphoserine" evidence="4">
    <location>
        <position position="427"/>
    </location>
</feature>
<feature type="glycosylation site" description="N-linked (GlcNAc...) asparagine" evidence="2">
    <location>
        <position position="146"/>
    </location>
</feature>
<feature type="glycosylation site" description="N-linked (GlcNAc...) asparagine" evidence="2">
    <location>
        <position position="151"/>
    </location>
</feature>
<feature type="glycosylation site" description="N-linked (GlcNAc...) asparagine" evidence="2">
    <location>
        <position position="195"/>
    </location>
</feature>
<feature type="glycosylation site" description="N-linked (GlcNAc...) asparagine" evidence="2">
    <location>
        <position position="221"/>
    </location>
</feature>
<comment type="function">
    <text evidence="1">Involved in the transport of the cationic amino acids (arginine, lysine and ornithine).</text>
</comment>
<comment type="subcellular location">
    <subcellularLocation>
        <location evidence="1">Membrane</location>
        <topology evidence="1">Multi-pass membrane protein</topology>
    </subcellularLocation>
</comment>
<comment type="similarity">
    <text evidence="3">Belongs to the amino acid-polyamine-organocation (APC) superfamily. Cationic amino acid transporter (CAT) (TC 2.A.3.3) family.</text>
</comment>
<name>CTR4_MOUSE</name>
<dbReference type="EMBL" id="AK043772">
    <property type="protein sequence ID" value="BAC31651.1"/>
    <property type="molecule type" value="mRNA"/>
</dbReference>
<dbReference type="EMBL" id="AK162398">
    <property type="protein sequence ID" value="BAE36893.1"/>
    <property type="molecule type" value="mRNA"/>
</dbReference>
<dbReference type="CCDS" id="CCDS28008.1"/>
<dbReference type="RefSeq" id="NP_001346820.1">
    <property type="nucleotide sequence ID" value="NM_001359891.2"/>
</dbReference>
<dbReference type="RefSeq" id="NP_001346822.1">
    <property type="nucleotide sequence ID" value="NM_001359893.2"/>
</dbReference>
<dbReference type="RefSeq" id="NP_001403868.1">
    <property type="nucleotide sequence ID" value="NM_001416939.1"/>
</dbReference>
<dbReference type="RefSeq" id="NP_001403869.1">
    <property type="nucleotide sequence ID" value="NM_001416940.1"/>
</dbReference>
<dbReference type="RefSeq" id="NP_001403870.1">
    <property type="nucleotide sequence ID" value="NM_001416941.1"/>
</dbReference>
<dbReference type="RefSeq" id="NP_659101.2">
    <property type="nucleotide sequence ID" value="NM_144852.3"/>
</dbReference>
<dbReference type="RefSeq" id="XP_017172438.1">
    <property type="nucleotide sequence ID" value="XM_017316949.1"/>
</dbReference>
<dbReference type="RefSeq" id="XP_017172439.1">
    <property type="nucleotide sequence ID" value="XM_017316950.1"/>
</dbReference>
<dbReference type="RefSeq" id="XP_017172440.1">
    <property type="nucleotide sequence ID" value="XM_017316951.1"/>
</dbReference>
<dbReference type="SMR" id="Q8BLQ7"/>
<dbReference type="FunCoup" id="Q8BLQ7">
    <property type="interactions" value="136"/>
</dbReference>
<dbReference type="STRING" id="10090.ENSMUSP00000127280"/>
<dbReference type="GlyCosmos" id="Q8BLQ7">
    <property type="glycosylation" value="4 sites, No reported glycans"/>
</dbReference>
<dbReference type="GlyGen" id="Q8BLQ7">
    <property type="glycosylation" value="5 sites"/>
</dbReference>
<dbReference type="iPTMnet" id="Q8BLQ7"/>
<dbReference type="PhosphoSitePlus" id="Q8BLQ7"/>
<dbReference type="SwissPalm" id="Q8BLQ7"/>
<dbReference type="PaxDb" id="10090-ENSMUSP00000127280"/>
<dbReference type="ProteomicsDB" id="285351"/>
<dbReference type="Antibodypedia" id="23447">
    <property type="antibodies" value="95 antibodies from 25 providers"/>
</dbReference>
<dbReference type="DNASU" id="224022"/>
<dbReference type="Ensembl" id="ENSMUST00000063544.11">
    <property type="protein sequence ID" value="ENSMUSP00000067243.5"/>
    <property type="gene ID" value="ENSMUSG00000022756.18"/>
</dbReference>
<dbReference type="Ensembl" id="ENSMUST00000172164.10">
    <property type="protein sequence ID" value="ENSMUSP00000127280.2"/>
    <property type="gene ID" value="ENSMUSG00000022756.18"/>
</dbReference>
<dbReference type="GeneID" id="224022"/>
<dbReference type="KEGG" id="mmu:224022"/>
<dbReference type="UCSC" id="uc007ylk.1">
    <property type="organism name" value="mouse"/>
</dbReference>
<dbReference type="AGR" id="MGI:2146512"/>
<dbReference type="CTD" id="6545"/>
<dbReference type="MGI" id="MGI:2146512">
    <property type="gene designation" value="Slc7a4"/>
</dbReference>
<dbReference type="VEuPathDB" id="HostDB:ENSMUSG00000022756"/>
<dbReference type="eggNOG" id="KOG1286">
    <property type="taxonomic scope" value="Eukaryota"/>
</dbReference>
<dbReference type="GeneTree" id="ENSGT00940000154637"/>
<dbReference type="HOGENOM" id="CLU_007946_15_7_1"/>
<dbReference type="InParanoid" id="Q8BLQ7"/>
<dbReference type="OMA" id="LMFGWAP"/>
<dbReference type="OrthoDB" id="9446449at2759"/>
<dbReference type="PhylomeDB" id="Q8BLQ7"/>
<dbReference type="TreeFam" id="TF315212"/>
<dbReference type="BioGRID-ORCS" id="224022">
    <property type="hits" value="2 hits in 77 CRISPR screens"/>
</dbReference>
<dbReference type="PRO" id="PR:Q8BLQ7"/>
<dbReference type="Proteomes" id="UP000000589">
    <property type="component" value="Chromosome 16"/>
</dbReference>
<dbReference type="RNAct" id="Q8BLQ7">
    <property type="molecule type" value="protein"/>
</dbReference>
<dbReference type="Bgee" id="ENSMUSG00000022756">
    <property type="expression patterns" value="Expressed in prostate gland ventral lobe and 163 other cell types or tissues"/>
</dbReference>
<dbReference type="ExpressionAtlas" id="Q8BLQ7">
    <property type="expression patterns" value="baseline and differential"/>
</dbReference>
<dbReference type="GO" id="GO:0016020">
    <property type="term" value="C:membrane"/>
    <property type="evidence" value="ECO:0007669"/>
    <property type="project" value="UniProtKB-SubCell"/>
</dbReference>
<dbReference type="GO" id="GO:0015171">
    <property type="term" value="F:amino acid transmembrane transporter activity"/>
    <property type="evidence" value="ECO:0007669"/>
    <property type="project" value="UniProtKB-ARBA"/>
</dbReference>
<dbReference type="GO" id="GO:0046943">
    <property type="term" value="F:carboxylic acid transmembrane transporter activity"/>
    <property type="evidence" value="ECO:0007669"/>
    <property type="project" value="UniProtKB-ARBA"/>
</dbReference>
<dbReference type="FunFam" id="1.20.1740.10:FF:000010">
    <property type="entry name" value="probable cationic amino acid transporter"/>
    <property type="match status" value="1"/>
</dbReference>
<dbReference type="Gene3D" id="1.20.1740.10">
    <property type="entry name" value="Amino acid/polyamine transporter I"/>
    <property type="match status" value="2"/>
</dbReference>
<dbReference type="InterPro" id="IPR002293">
    <property type="entry name" value="AA/rel_permease1"/>
</dbReference>
<dbReference type="InterPro" id="IPR029485">
    <property type="entry name" value="CAT_C"/>
</dbReference>
<dbReference type="PANTHER" id="PTHR43243:SF4">
    <property type="entry name" value="CATIONIC AMINO ACID TRANSPORTER 4"/>
    <property type="match status" value="1"/>
</dbReference>
<dbReference type="PANTHER" id="PTHR43243">
    <property type="entry name" value="INNER MEMBRANE TRANSPORTER YGJI-RELATED"/>
    <property type="match status" value="1"/>
</dbReference>
<dbReference type="Pfam" id="PF13520">
    <property type="entry name" value="AA_permease_2"/>
    <property type="match status" value="1"/>
</dbReference>
<dbReference type="Pfam" id="PF13906">
    <property type="entry name" value="AA_permease_C"/>
    <property type="match status" value="1"/>
</dbReference>
<dbReference type="PIRSF" id="PIRSF006060">
    <property type="entry name" value="AA_transporter"/>
    <property type="match status" value="1"/>
</dbReference>
<proteinExistence type="evidence at protein level"/>
<gene>
    <name type="primary">Slc7a4</name>
</gene>
<sequence length="635" mass="68350">MARGLPSTACLARFCQKLNRLKPLEESSMETSLRRCLSTLDLTLLGVGGMVGSGLYVLTGTVAKDMAGPAVLLSFLVAAVASLLAALCYAEFGARVPRTGSAYLFTYVSMGEIWAFLIGWNVLLEYLIGGAAVARAWSGYLDAIFNHSIRNFTESHLGVWQVPFLAHYPDFLAAGILLVASAFVSCGARVSSWLNHTFSAISLIVILFIIVLGFILARPHNWSAEEGGFAPFGFSGILAGTATCFYAFVGFDVIAASSEEAKNPRWAVPMAIAISLSLAAGAYILVSTVLTLMVPWHSLDPDSALADAFYRRGYSWAGFIVAVGSICAMNTVLLSNLFSLPRIVYAMAADGLFFQVFARVHPRTQVPVVGILVFGVLMALLALLLDLEALVQFLSIGTLLAYTFVATSIIVLRFQKASPPSSPCLASPGPTAKKYDSFSDHIQLVGAEQTSMSEPGQLRPALKPFLGFLDGCSPGTAVAWALGILVASAISLACVLVFGNSDLHLPQWGYVLLLVISGAVFLSSLLVLGAHQQQKKQDTFQIPLVPLTPALSILLNTCLMLKLSYLTWLRFIFWLLVGLVVYFGYGIWHSKENQREPLELTTAHYVVFPSGSLEETVQAVQPSSQSPVRESGCTE</sequence>
<evidence type="ECO:0000250" key="1"/>
<evidence type="ECO:0000255" key="2"/>
<evidence type="ECO:0000305" key="3"/>
<evidence type="ECO:0007744" key="4">
    <source>
    </source>
</evidence>
<organism>
    <name type="scientific">Mus musculus</name>
    <name type="common">Mouse</name>
    <dbReference type="NCBI Taxonomy" id="10090"/>
    <lineage>
        <taxon>Eukaryota</taxon>
        <taxon>Metazoa</taxon>
        <taxon>Chordata</taxon>
        <taxon>Craniata</taxon>
        <taxon>Vertebrata</taxon>
        <taxon>Euteleostomi</taxon>
        <taxon>Mammalia</taxon>
        <taxon>Eutheria</taxon>
        <taxon>Euarchontoglires</taxon>
        <taxon>Glires</taxon>
        <taxon>Rodentia</taxon>
        <taxon>Myomorpha</taxon>
        <taxon>Muroidea</taxon>
        <taxon>Muridae</taxon>
        <taxon>Murinae</taxon>
        <taxon>Mus</taxon>
        <taxon>Mus</taxon>
    </lineage>
</organism>
<reference key="1">
    <citation type="journal article" date="2005" name="Science">
        <title>The transcriptional landscape of the mammalian genome.</title>
        <authorList>
            <person name="Carninci P."/>
            <person name="Kasukawa T."/>
            <person name="Katayama S."/>
            <person name="Gough J."/>
            <person name="Frith M.C."/>
            <person name="Maeda N."/>
            <person name="Oyama R."/>
            <person name="Ravasi T."/>
            <person name="Lenhard B."/>
            <person name="Wells C."/>
            <person name="Kodzius R."/>
            <person name="Shimokawa K."/>
            <person name="Bajic V.B."/>
            <person name="Brenner S.E."/>
            <person name="Batalov S."/>
            <person name="Forrest A.R."/>
            <person name="Zavolan M."/>
            <person name="Davis M.J."/>
            <person name="Wilming L.G."/>
            <person name="Aidinis V."/>
            <person name="Allen J.E."/>
            <person name="Ambesi-Impiombato A."/>
            <person name="Apweiler R."/>
            <person name="Aturaliya R.N."/>
            <person name="Bailey T.L."/>
            <person name="Bansal M."/>
            <person name="Baxter L."/>
            <person name="Beisel K.W."/>
            <person name="Bersano T."/>
            <person name="Bono H."/>
            <person name="Chalk A.M."/>
            <person name="Chiu K.P."/>
            <person name="Choudhary V."/>
            <person name="Christoffels A."/>
            <person name="Clutterbuck D.R."/>
            <person name="Crowe M.L."/>
            <person name="Dalla E."/>
            <person name="Dalrymple B.P."/>
            <person name="de Bono B."/>
            <person name="Della Gatta G."/>
            <person name="di Bernardo D."/>
            <person name="Down T."/>
            <person name="Engstrom P."/>
            <person name="Fagiolini M."/>
            <person name="Faulkner G."/>
            <person name="Fletcher C.F."/>
            <person name="Fukushima T."/>
            <person name="Furuno M."/>
            <person name="Futaki S."/>
            <person name="Gariboldi M."/>
            <person name="Georgii-Hemming P."/>
            <person name="Gingeras T.R."/>
            <person name="Gojobori T."/>
            <person name="Green R.E."/>
            <person name="Gustincich S."/>
            <person name="Harbers M."/>
            <person name="Hayashi Y."/>
            <person name="Hensch T.K."/>
            <person name="Hirokawa N."/>
            <person name="Hill D."/>
            <person name="Huminiecki L."/>
            <person name="Iacono M."/>
            <person name="Ikeo K."/>
            <person name="Iwama A."/>
            <person name="Ishikawa T."/>
            <person name="Jakt M."/>
            <person name="Kanapin A."/>
            <person name="Katoh M."/>
            <person name="Kawasawa Y."/>
            <person name="Kelso J."/>
            <person name="Kitamura H."/>
            <person name="Kitano H."/>
            <person name="Kollias G."/>
            <person name="Krishnan S.P."/>
            <person name="Kruger A."/>
            <person name="Kummerfeld S.K."/>
            <person name="Kurochkin I.V."/>
            <person name="Lareau L.F."/>
            <person name="Lazarevic D."/>
            <person name="Lipovich L."/>
            <person name="Liu J."/>
            <person name="Liuni S."/>
            <person name="McWilliam S."/>
            <person name="Madan Babu M."/>
            <person name="Madera M."/>
            <person name="Marchionni L."/>
            <person name="Matsuda H."/>
            <person name="Matsuzawa S."/>
            <person name="Miki H."/>
            <person name="Mignone F."/>
            <person name="Miyake S."/>
            <person name="Morris K."/>
            <person name="Mottagui-Tabar S."/>
            <person name="Mulder N."/>
            <person name="Nakano N."/>
            <person name="Nakauchi H."/>
            <person name="Ng P."/>
            <person name="Nilsson R."/>
            <person name="Nishiguchi S."/>
            <person name="Nishikawa S."/>
            <person name="Nori F."/>
            <person name="Ohara O."/>
            <person name="Okazaki Y."/>
            <person name="Orlando V."/>
            <person name="Pang K.C."/>
            <person name="Pavan W.J."/>
            <person name="Pavesi G."/>
            <person name="Pesole G."/>
            <person name="Petrovsky N."/>
            <person name="Piazza S."/>
            <person name="Reed J."/>
            <person name="Reid J.F."/>
            <person name="Ring B.Z."/>
            <person name="Ringwald M."/>
            <person name="Rost B."/>
            <person name="Ruan Y."/>
            <person name="Salzberg S.L."/>
            <person name="Sandelin A."/>
            <person name="Schneider C."/>
            <person name="Schoenbach C."/>
            <person name="Sekiguchi K."/>
            <person name="Semple C.A."/>
            <person name="Seno S."/>
            <person name="Sessa L."/>
            <person name="Sheng Y."/>
            <person name="Shibata Y."/>
            <person name="Shimada H."/>
            <person name="Shimada K."/>
            <person name="Silva D."/>
            <person name="Sinclair B."/>
            <person name="Sperling S."/>
            <person name="Stupka E."/>
            <person name="Sugiura K."/>
            <person name="Sultana R."/>
            <person name="Takenaka Y."/>
            <person name="Taki K."/>
            <person name="Tammoja K."/>
            <person name="Tan S.L."/>
            <person name="Tang S."/>
            <person name="Taylor M.S."/>
            <person name="Tegner J."/>
            <person name="Teichmann S.A."/>
            <person name="Ueda H.R."/>
            <person name="van Nimwegen E."/>
            <person name="Verardo R."/>
            <person name="Wei C.L."/>
            <person name="Yagi K."/>
            <person name="Yamanishi H."/>
            <person name="Zabarovsky E."/>
            <person name="Zhu S."/>
            <person name="Zimmer A."/>
            <person name="Hide W."/>
            <person name="Bult C."/>
            <person name="Grimmond S.M."/>
            <person name="Teasdale R.D."/>
            <person name="Liu E.T."/>
            <person name="Brusic V."/>
            <person name="Quackenbush J."/>
            <person name="Wahlestedt C."/>
            <person name="Mattick J.S."/>
            <person name="Hume D.A."/>
            <person name="Kai C."/>
            <person name="Sasaki D."/>
            <person name="Tomaru Y."/>
            <person name="Fukuda S."/>
            <person name="Kanamori-Katayama M."/>
            <person name="Suzuki M."/>
            <person name="Aoki J."/>
            <person name="Arakawa T."/>
            <person name="Iida J."/>
            <person name="Imamura K."/>
            <person name="Itoh M."/>
            <person name="Kato T."/>
            <person name="Kawaji H."/>
            <person name="Kawagashira N."/>
            <person name="Kawashima T."/>
            <person name="Kojima M."/>
            <person name="Kondo S."/>
            <person name="Konno H."/>
            <person name="Nakano K."/>
            <person name="Ninomiya N."/>
            <person name="Nishio T."/>
            <person name="Okada M."/>
            <person name="Plessy C."/>
            <person name="Shibata K."/>
            <person name="Shiraki T."/>
            <person name="Suzuki S."/>
            <person name="Tagami M."/>
            <person name="Waki K."/>
            <person name="Watahiki A."/>
            <person name="Okamura-Oho Y."/>
            <person name="Suzuki H."/>
            <person name="Kawai J."/>
            <person name="Hayashizaki Y."/>
        </authorList>
    </citation>
    <scope>NUCLEOTIDE SEQUENCE [LARGE SCALE MRNA]</scope>
    <source>
        <strain>C57BL/6J</strain>
        <tissue>Brain cortex</tissue>
        <tissue>Diencephalon</tissue>
    </source>
</reference>
<reference key="2">
    <citation type="journal article" date="2010" name="Cell">
        <title>A tissue-specific atlas of mouse protein phosphorylation and expression.</title>
        <authorList>
            <person name="Huttlin E.L."/>
            <person name="Jedrychowski M.P."/>
            <person name="Elias J.E."/>
            <person name="Goswami T."/>
            <person name="Rad R."/>
            <person name="Beausoleil S.A."/>
            <person name="Villen J."/>
            <person name="Haas W."/>
            <person name="Sowa M.E."/>
            <person name="Gygi S.P."/>
        </authorList>
    </citation>
    <scope>PHOSPHORYLATION [LARGE SCALE ANALYSIS] AT SER-422 AND SER-427</scope>
    <scope>IDENTIFICATION BY MASS SPECTROMETRY [LARGE SCALE ANALYSIS]</scope>
    <source>
        <tissue>Brain</tissue>
    </source>
</reference>
<keyword id="KW-0029">Amino-acid transport</keyword>
<keyword id="KW-0325">Glycoprotein</keyword>
<keyword id="KW-0472">Membrane</keyword>
<keyword id="KW-0597">Phosphoprotein</keyword>
<keyword id="KW-1185">Reference proteome</keyword>
<keyword id="KW-0812">Transmembrane</keyword>
<keyword id="KW-1133">Transmembrane helix</keyword>
<keyword id="KW-0813">Transport</keyword>